<reference key="1">
    <citation type="journal article" date="2005" name="Nucleic Acids Res.">
        <title>Genomic blueprint of Hahella chejuensis, a marine microbe producing an algicidal agent.</title>
        <authorList>
            <person name="Jeong H."/>
            <person name="Yim J.H."/>
            <person name="Lee C."/>
            <person name="Choi S.-H."/>
            <person name="Park Y.K."/>
            <person name="Yoon S.H."/>
            <person name="Hur C.-G."/>
            <person name="Kang H.-Y."/>
            <person name="Kim D."/>
            <person name="Lee H.H."/>
            <person name="Park K.H."/>
            <person name="Park S.-H."/>
            <person name="Park H.-S."/>
            <person name="Lee H.K."/>
            <person name="Oh T.K."/>
            <person name="Kim J.F."/>
        </authorList>
    </citation>
    <scope>NUCLEOTIDE SEQUENCE [LARGE SCALE GENOMIC DNA]</scope>
    <source>
        <strain>KCTC 2396</strain>
    </source>
</reference>
<organism>
    <name type="scientific">Hahella chejuensis (strain KCTC 2396)</name>
    <dbReference type="NCBI Taxonomy" id="349521"/>
    <lineage>
        <taxon>Bacteria</taxon>
        <taxon>Pseudomonadati</taxon>
        <taxon>Pseudomonadota</taxon>
        <taxon>Gammaproteobacteria</taxon>
        <taxon>Oceanospirillales</taxon>
        <taxon>Hahellaceae</taxon>
        <taxon>Hahella</taxon>
    </lineage>
</organism>
<comment type="function">
    <text evidence="1">Involved in lipopolysaccharide (LPS) biosynthesis. Translocates lipid A-core from the inner to the outer leaflet of the inner membrane. Transmembrane domains (TMD) form a pore in the inner membrane and the ATP-binding domain (NBD) is responsible for energy generation.</text>
</comment>
<comment type="catalytic activity">
    <reaction evidence="1">
        <text>ATP + H2O + lipid A-core oligosaccharideSide 1 = ADP + phosphate + lipid A-core oligosaccharideSide 2.</text>
        <dbReference type="EC" id="7.5.2.6"/>
    </reaction>
</comment>
<comment type="subunit">
    <text evidence="1">Homodimer.</text>
</comment>
<comment type="subcellular location">
    <subcellularLocation>
        <location evidence="1">Cell inner membrane</location>
        <topology evidence="1">Multi-pass membrane protein</topology>
    </subcellularLocation>
</comment>
<comment type="domain">
    <text evidence="1">In MsbA the ATP-binding domain (NBD) and the transmembrane domain (TMD) are fused.</text>
</comment>
<comment type="similarity">
    <text evidence="1">Belongs to the ABC transporter superfamily. Lipid exporter (TC 3.A.1.106) family.</text>
</comment>
<sequence length="585" mass="64225">MSKVAKQYAGAQVYGRLLSYLKPLWKVFALAVLGNVIYALASAAMADATKYIVAAIETPSPEGRLLVPMLIIGIFALRGLGSFCGGYFMARVARGIVHRMRLELFRHLTVLPCRFFDSNSTGHLVSRITYNVDQVTGAATNAITVVLREGFTVIGLMGYMIYVSWKLTLLFLVLGPIIGVLIGYVSKRFRRISRRIQSSMGDVTHVASESIGGYRVMRTFGGEEYEFNRFMKASEYNITQALKMSLTQALSTPIIQLVISVFIALLVWLALSPEVRGNMSTGEFLAYITAATTCAKPIRQLTEVNAVIQRGISAAQDVFMQLDEPVEKDEGSYVADRVQGRLEFKSLGFAYSDEGKPALQEINLVIEPGETVALVGRSGSGKSTLVNLLPRFYDYEQGEILLDGKPLKDFALTSLRRQISIVTQQVVLFNDTVTNNIAYGALADATPEQVREAAKSADALGFIEQLEQGFDTLLGENGTRLSGGQRQRMVIARALLKDSPILILDEATSALDTHAERNIQSALETLMKGRTTLVVAHRLSTIENADKIVVMDQGRIVEVGSHRELIEKDGAYAALHKLQFSEADA</sequence>
<dbReference type="EC" id="7.5.2.6" evidence="1"/>
<dbReference type="EMBL" id="CP000155">
    <property type="protein sequence ID" value="ABC29489.1"/>
    <property type="molecule type" value="Genomic_DNA"/>
</dbReference>
<dbReference type="RefSeq" id="WP_011396558.1">
    <property type="nucleotide sequence ID" value="NC_007645.1"/>
</dbReference>
<dbReference type="SMR" id="Q2SIN5"/>
<dbReference type="STRING" id="349521.HCH_02703"/>
<dbReference type="KEGG" id="hch:HCH_02703"/>
<dbReference type="eggNOG" id="COG1132">
    <property type="taxonomic scope" value="Bacteria"/>
</dbReference>
<dbReference type="HOGENOM" id="CLU_000604_84_3_6"/>
<dbReference type="OrthoDB" id="9806127at2"/>
<dbReference type="Proteomes" id="UP000000238">
    <property type="component" value="Chromosome"/>
</dbReference>
<dbReference type="GO" id="GO:0005886">
    <property type="term" value="C:plasma membrane"/>
    <property type="evidence" value="ECO:0007669"/>
    <property type="project" value="UniProtKB-SubCell"/>
</dbReference>
<dbReference type="GO" id="GO:0015421">
    <property type="term" value="F:ABC-type oligopeptide transporter activity"/>
    <property type="evidence" value="ECO:0007669"/>
    <property type="project" value="TreeGrafter"/>
</dbReference>
<dbReference type="GO" id="GO:0005524">
    <property type="term" value="F:ATP binding"/>
    <property type="evidence" value="ECO:0007669"/>
    <property type="project" value="UniProtKB-KW"/>
</dbReference>
<dbReference type="GO" id="GO:0016887">
    <property type="term" value="F:ATP hydrolysis activity"/>
    <property type="evidence" value="ECO:0007669"/>
    <property type="project" value="InterPro"/>
</dbReference>
<dbReference type="GO" id="GO:0034040">
    <property type="term" value="F:ATPase-coupled lipid transmembrane transporter activity"/>
    <property type="evidence" value="ECO:0007669"/>
    <property type="project" value="InterPro"/>
</dbReference>
<dbReference type="CDD" id="cd18552">
    <property type="entry name" value="ABC_6TM_MsbA_like"/>
    <property type="match status" value="1"/>
</dbReference>
<dbReference type="FunFam" id="3.40.50.300:FF:000140">
    <property type="entry name" value="Lipid A export ATP-binding/permease protein MsbA"/>
    <property type="match status" value="1"/>
</dbReference>
<dbReference type="Gene3D" id="1.20.1560.10">
    <property type="entry name" value="ABC transporter type 1, transmembrane domain"/>
    <property type="match status" value="1"/>
</dbReference>
<dbReference type="Gene3D" id="3.40.50.300">
    <property type="entry name" value="P-loop containing nucleotide triphosphate hydrolases"/>
    <property type="match status" value="1"/>
</dbReference>
<dbReference type="InterPro" id="IPR003593">
    <property type="entry name" value="AAA+_ATPase"/>
</dbReference>
<dbReference type="InterPro" id="IPR011527">
    <property type="entry name" value="ABC1_TM_dom"/>
</dbReference>
<dbReference type="InterPro" id="IPR036640">
    <property type="entry name" value="ABC1_TM_sf"/>
</dbReference>
<dbReference type="InterPro" id="IPR003439">
    <property type="entry name" value="ABC_transporter-like_ATP-bd"/>
</dbReference>
<dbReference type="InterPro" id="IPR017871">
    <property type="entry name" value="ABC_transporter-like_CS"/>
</dbReference>
<dbReference type="InterPro" id="IPR011917">
    <property type="entry name" value="ABC_transpr_lipidA"/>
</dbReference>
<dbReference type="InterPro" id="IPR027417">
    <property type="entry name" value="P-loop_NTPase"/>
</dbReference>
<dbReference type="InterPro" id="IPR039421">
    <property type="entry name" value="Type_1_exporter"/>
</dbReference>
<dbReference type="NCBIfam" id="TIGR02203">
    <property type="entry name" value="MsbA_lipidA"/>
    <property type="match status" value="1"/>
</dbReference>
<dbReference type="PANTHER" id="PTHR43394:SF1">
    <property type="entry name" value="ATP-BINDING CASSETTE SUB-FAMILY B MEMBER 10, MITOCHONDRIAL"/>
    <property type="match status" value="1"/>
</dbReference>
<dbReference type="PANTHER" id="PTHR43394">
    <property type="entry name" value="ATP-DEPENDENT PERMEASE MDL1, MITOCHONDRIAL"/>
    <property type="match status" value="1"/>
</dbReference>
<dbReference type="Pfam" id="PF00664">
    <property type="entry name" value="ABC_membrane"/>
    <property type="match status" value="1"/>
</dbReference>
<dbReference type="Pfam" id="PF00005">
    <property type="entry name" value="ABC_tran"/>
    <property type="match status" value="1"/>
</dbReference>
<dbReference type="SMART" id="SM00382">
    <property type="entry name" value="AAA"/>
    <property type="match status" value="1"/>
</dbReference>
<dbReference type="SUPFAM" id="SSF90123">
    <property type="entry name" value="ABC transporter transmembrane region"/>
    <property type="match status" value="1"/>
</dbReference>
<dbReference type="SUPFAM" id="SSF52540">
    <property type="entry name" value="P-loop containing nucleoside triphosphate hydrolases"/>
    <property type="match status" value="1"/>
</dbReference>
<dbReference type="PROSITE" id="PS50929">
    <property type="entry name" value="ABC_TM1F"/>
    <property type="match status" value="1"/>
</dbReference>
<dbReference type="PROSITE" id="PS00211">
    <property type="entry name" value="ABC_TRANSPORTER_1"/>
    <property type="match status" value="1"/>
</dbReference>
<dbReference type="PROSITE" id="PS50893">
    <property type="entry name" value="ABC_TRANSPORTER_2"/>
    <property type="match status" value="1"/>
</dbReference>
<dbReference type="PROSITE" id="PS51239">
    <property type="entry name" value="MSBA"/>
    <property type="match status" value="1"/>
</dbReference>
<name>MSBA_HAHCH</name>
<feature type="chain" id="PRO_0000271631" description="ATP-dependent lipid A-core flippase">
    <location>
        <begin position="1"/>
        <end position="585"/>
    </location>
</feature>
<feature type="transmembrane region" description="Helical" evidence="1">
    <location>
        <begin position="24"/>
        <end position="44"/>
    </location>
</feature>
<feature type="transmembrane region" description="Helical" evidence="1">
    <location>
        <begin position="65"/>
        <end position="85"/>
    </location>
</feature>
<feature type="transmembrane region" description="Helical" evidence="1">
    <location>
        <begin position="143"/>
        <end position="163"/>
    </location>
</feature>
<feature type="transmembrane region" description="Helical" evidence="1">
    <location>
        <begin position="165"/>
        <end position="185"/>
    </location>
</feature>
<feature type="transmembrane region" description="Helical" evidence="1">
    <location>
        <begin position="253"/>
        <end position="273"/>
    </location>
</feature>
<feature type="domain" description="ABC transmembrane type-1" evidence="1">
    <location>
        <begin position="29"/>
        <end position="310"/>
    </location>
</feature>
<feature type="domain" description="ABC transporter" evidence="1">
    <location>
        <begin position="342"/>
        <end position="578"/>
    </location>
</feature>
<feature type="binding site" evidence="1">
    <location>
        <begin position="376"/>
        <end position="383"/>
    </location>
    <ligand>
        <name>ATP</name>
        <dbReference type="ChEBI" id="CHEBI:30616"/>
    </ligand>
</feature>
<accession>Q2SIN5</accession>
<protein>
    <recommendedName>
        <fullName evidence="1">ATP-dependent lipid A-core flippase</fullName>
        <ecNumber evidence="1">7.5.2.6</ecNumber>
    </recommendedName>
    <alternativeName>
        <fullName evidence="1">Lipid A export ATP-binding/permease protein MsbA</fullName>
    </alternativeName>
</protein>
<proteinExistence type="inferred from homology"/>
<keyword id="KW-0067">ATP-binding</keyword>
<keyword id="KW-0997">Cell inner membrane</keyword>
<keyword id="KW-1003">Cell membrane</keyword>
<keyword id="KW-0445">Lipid transport</keyword>
<keyword id="KW-0472">Membrane</keyword>
<keyword id="KW-0547">Nucleotide-binding</keyword>
<keyword id="KW-1185">Reference proteome</keyword>
<keyword id="KW-1278">Translocase</keyword>
<keyword id="KW-0812">Transmembrane</keyword>
<keyword id="KW-1133">Transmembrane helix</keyword>
<keyword id="KW-0813">Transport</keyword>
<gene>
    <name evidence="1" type="primary">msbA</name>
    <name type="ordered locus">HCH_02703</name>
</gene>
<evidence type="ECO:0000255" key="1">
    <source>
        <dbReference type="HAMAP-Rule" id="MF_01703"/>
    </source>
</evidence>